<comment type="function">
    <text evidence="1">La protein plays a role in the transcription of RNA polymerase III. It is most probably a transcription termination factor. Binds to the 3' termini of virtually all nascent polymerase III transcripts (By similarity).</text>
</comment>
<comment type="subcellular location">
    <subcellularLocation>
        <location evidence="7">Nucleus</location>
    </subcellularLocation>
</comment>
<comment type="developmental stage">
    <text>Barely detectable in stage I/II oocytes, accumulate in stage III/IV oocytes, then exhibit a roughly constant steady state level in mature oocytes, eggs, and early embryos.</text>
</comment>
<comment type="PTM">
    <text evidence="7">Phosphorylated.</text>
</comment>
<comment type="miscellaneous">
    <text>There are two forms of La, LaA and LaB, in Xenopus.</text>
</comment>
<name>LAA_XENLA</name>
<proteinExistence type="evidence at transcript level"/>
<dbReference type="EMBL" id="X68817">
    <property type="protein sequence ID" value="CAA48715.1"/>
    <property type="molecule type" value="mRNA"/>
</dbReference>
<dbReference type="PIR" id="S33818">
    <property type="entry name" value="S33818"/>
</dbReference>
<dbReference type="RefSeq" id="NP_001081021.1">
    <property type="nucleotide sequence ID" value="NM_001087552.1"/>
</dbReference>
<dbReference type="SMR" id="P28048"/>
<dbReference type="DNASU" id="394333"/>
<dbReference type="GeneID" id="394333"/>
<dbReference type="KEGG" id="xla:394333"/>
<dbReference type="AGR" id="Xenbase:XB-GENE-6254453"/>
<dbReference type="CTD" id="394333"/>
<dbReference type="Xenbase" id="XB-GENE-6254453">
    <property type="gene designation" value="ssb.S"/>
</dbReference>
<dbReference type="OrthoDB" id="439993at2759"/>
<dbReference type="Proteomes" id="UP000186698">
    <property type="component" value="Chromosome 9_10S"/>
</dbReference>
<dbReference type="Bgee" id="394333">
    <property type="expression patterns" value="Expressed in egg cell and 19 other cell types or tissues"/>
</dbReference>
<dbReference type="GO" id="GO:0010494">
    <property type="term" value="C:cytoplasmic stress granule"/>
    <property type="evidence" value="ECO:0000318"/>
    <property type="project" value="GO_Central"/>
</dbReference>
<dbReference type="GO" id="GO:0005829">
    <property type="term" value="C:cytosol"/>
    <property type="evidence" value="ECO:0000318"/>
    <property type="project" value="GO_Central"/>
</dbReference>
<dbReference type="GO" id="GO:0005634">
    <property type="term" value="C:nucleus"/>
    <property type="evidence" value="ECO:0000318"/>
    <property type="project" value="GO_Central"/>
</dbReference>
<dbReference type="GO" id="GO:1990904">
    <property type="term" value="C:ribonucleoprotein complex"/>
    <property type="evidence" value="ECO:0007669"/>
    <property type="project" value="InterPro"/>
</dbReference>
<dbReference type="GO" id="GO:0003729">
    <property type="term" value="F:mRNA binding"/>
    <property type="evidence" value="ECO:0000318"/>
    <property type="project" value="GO_Central"/>
</dbReference>
<dbReference type="GO" id="GO:0045727">
    <property type="term" value="P:positive regulation of translation"/>
    <property type="evidence" value="ECO:0000318"/>
    <property type="project" value="GO_Central"/>
</dbReference>
<dbReference type="GO" id="GO:0008033">
    <property type="term" value="P:tRNA processing"/>
    <property type="evidence" value="ECO:0000318"/>
    <property type="project" value="GO_Central"/>
</dbReference>
<dbReference type="CDD" id="cd08028">
    <property type="entry name" value="LARP_3"/>
    <property type="match status" value="1"/>
</dbReference>
<dbReference type="CDD" id="cd12291">
    <property type="entry name" value="RRM1_La"/>
    <property type="match status" value="1"/>
</dbReference>
<dbReference type="CDD" id="cd12541">
    <property type="entry name" value="RRM2_La"/>
    <property type="match status" value="1"/>
</dbReference>
<dbReference type="FunFam" id="1.10.10.10:FF:000336">
    <property type="entry name" value="lupus La protein homolog"/>
    <property type="match status" value="1"/>
</dbReference>
<dbReference type="Gene3D" id="3.30.70.330">
    <property type="match status" value="2"/>
</dbReference>
<dbReference type="Gene3D" id="1.10.10.10">
    <property type="entry name" value="Winged helix-like DNA-binding domain superfamily/Winged helix DNA-binding domain"/>
    <property type="match status" value="1"/>
</dbReference>
<dbReference type="InterPro" id="IPR045180">
    <property type="entry name" value="La_dom_prot"/>
</dbReference>
<dbReference type="InterPro" id="IPR006630">
    <property type="entry name" value="La_HTH"/>
</dbReference>
<dbReference type="InterPro" id="IPR014886">
    <property type="entry name" value="La_xRRM"/>
</dbReference>
<dbReference type="InterPro" id="IPR002344">
    <property type="entry name" value="Lupus_La"/>
</dbReference>
<dbReference type="InterPro" id="IPR012677">
    <property type="entry name" value="Nucleotide-bd_a/b_plait_sf"/>
</dbReference>
<dbReference type="InterPro" id="IPR035979">
    <property type="entry name" value="RBD_domain_sf"/>
</dbReference>
<dbReference type="InterPro" id="IPR000504">
    <property type="entry name" value="RRM_dom"/>
</dbReference>
<dbReference type="InterPro" id="IPR036388">
    <property type="entry name" value="WH-like_DNA-bd_sf"/>
</dbReference>
<dbReference type="InterPro" id="IPR036390">
    <property type="entry name" value="WH_DNA-bd_sf"/>
</dbReference>
<dbReference type="PANTHER" id="PTHR22792:SF166">
    <property type="entry name" value="LUPUS LA PROTEIN HOMOLOG"/>
    <property type="match status" value="1"/>
</dbReference>
<dbReference type="PANTHER" id="PTHR22792">
    <property type="entry name" value="LUPUS LA PROTEIN-RELATED"/>
    <property type="match status" value="1"/>
</dbReference>
<dbReference type="Pfam" id="PF05383">
    <property type="entry name" value="La"/>
    <property type="match status" value="1"/>
</dbReference>
<dbReference type="Pfam" id="PF00076">
    <property type="entry name" value="RRM_1"/>
    <property type="match status" value="1"/>
</dbReference>
<dbReference type="Pfam" id="PF08777">
    <property type="entry name" value="RRM_3"/>
    <property type="match status" value="1"/>
</dbReference>
<dbReference type="PRINTS" id="PR00302">
    <property type="entry name" value="LUPUSLA"/>
</dbReference>
<dbReference type="SMART" id="SM00715">
    <property type="entry name" value="LA"/>
    <property type="match status" value="1"/>
</dbReference>
<dbReference type="SMART" id="SM00360">
    <property type="entry name" value="RRM"/>
    <property type="match status" value="1"/>
</dbReference>
<dbReference type="SUPFAM" id="SSF54928">
    <property type="entry name" value="RNA-binding domain, RBD"/>
    <property type="match status" value="2"/>
</dbReference>
<dbReference type="SUPFAM" id="SSF46785">
    <property type="entry name" value="Winged helix' DNA-binding domain"/>
    <property type="match status" value="1"/>
</dbReference>
<dbReference type="PROSITE" id="PS50961">
    <property type="entry name" value="HTH_LA"/>
    <property type="match status" value="1"/>
</dbReference>
<dbReference type="PROSITE" id="PS50102">
    <property type="entry name" value="RRM"/>
    <property type="match status" value="1"/>
</dbReference>
<dbReference type="PROSITE" id="PS51939">
    <property type="entry name" value="XRRM"/>
    <property type="match status" value="1"/>
</dbReference>
<protein>
    <recommendedName>
        <fullName>Lupus La protein homolog A</fullName>
    </recommendedName>
    <alternativeName>
        <fullName>La autoantigen homolog A</fullName>
    </alternativeName>
    <alternativeName>
        <fullName>La ribonucleoprotein A</fullName>
    </alternativeName>
</protein>
<evidence type="ECO:0000250" key="1"/>
<evidence type="ECO:0000255" key="2"/>
<evidence type="ECO:0000255" key="3">
    <source>
        <dbReference type="PROSITE-ProRule" id="PRU00176"/>
    </source>
</evidence>
<evidence type="ECO:0000255" key="4">
    <source>
        <dbReference type="PROSITE-ProRule" id="PRU00332"/>
    </source>
</evidence>
<evidence type="ECO:0000255" key="5">
    <source>
        <dbReference type="PROSITE-ProRule" id="PRU01288"/>
    </source>
</evidence>
<evidence type="ECO:0000256" key="6">
    <source>
        <dbReference type="SAM" id="MobiDB-lite"/>
    </source>
</evidence>
<evidence type="ECO:0000305" key="7"/>
<gene>
    <name type="primary">ssb-a</name>
    <name type="synonym">laa1</name>
</gene>
<feature type="chain" id="PRO_0000207603" description="Lupus La protein homolog A">
    <location>
        <begin position="1"/>
        <end position="428"/>
    </location>
</feature>
<feature type="domain" description="HTH La-type RNA-binding" evidence="4">
    <location>
        <begin position="7"/>
        <end position="99"/>
    </location>
</feature>
<feature type="domain" description="RRM" evidence="3">
    <location>
        <begin position="111"/>
        <end position="203"/>
    </location>
</feature>
<feature type="domain" description="xRRM" evidence="5">
    <location>
        <begin position="227"/>
        <end position="349"/>
    </location>
</feature>
<feature type="region of interest" description="Disordered" evidence="6">
    <location>
        <begin position="187"/>
        <end position="223"/>
    </location>
</feature>
<feature type="region of interest" description="Disordered" evidence="6">
    <location>
        <begin position="323"/>
        <end position="428"/>
    </location>
</feature>
<feature type="short sequence motif" description="Nuclear localization signal" evidence="2">
    <location>
        <begin position="196"/>
        <end position="212"/>
    </location>
</feature>
<feature type="short sequence motif" description="Nuclear localization signal" evidence="2">
    <location>
        <begin position="316"/>
        <end position="332"/>
    </location>
</feature>
<feature type="compositionally biased region" description="Basic residues" evidence="6">
    <location>
        <begin position="328"/>
        <end position="343"/>
    </location>
</feature>
<feature type="compositionally biased region" description="Basic residues" evidence="6">
    <location>
        <begin position="352"/>
        <end position="361"/>
    </location>
</feature>
<feature type="compositionally biased region" description="Acidic residues" evidence="6">
    <location>
        <begin position="366"/>
        <end position="377"/>
    </location>
</feature>
<feature type="compositionally biased region" description="Basic and acidic residues" evidence="6">
    <location>
        <begin position="406"/>
        <end position="428"/>
    </location>
</feature>
<accession>P28048</accession>
<keyword id="KW-0539">Nucleus</keyword>
<keyword id="KW-0597">Phosphoprotein</keyword>
<keyword id="KW-1185">Reference proteome</keyword>
<keyword id="KW-0694">RNA-binding</keyword>
<reference key="1">
    <citation type="journal article" date="1993" name="J. Mol. Biol.">
        <title>La proteins from Xenopus laevis. cDNA cloning and developmental expression.</title>
        <authorList>
            <person name="Scherly D."/>
            <person name="Stutz F."/>
            <person name="Lin-Marq N."/>
            <person name="Clarkson S.G."/>
        </authorList>
    </citation>
    <scope>NUCLEOTIDE SEQUENCE [MRNA]</scope>
    <source>
        <tissue>Oocyte</tissue>
    </source>
</reference>
<organism>
    <name type="scientific">Xenopus laevis</name>
    <name type="common">African clawed frog</name>
    <dbReference type="NCBI Taxonomy" id="8355"/>
    <lineage>
        <taxon>Eukaryota</taxon>
        <taxon>Metazoa</taxon>
        <taxon>Chordata</taxon>
        <taxon>Craniata</taxon>
        <taxon>Vertebrata</taxon>
        <taxon>Euteleostomi</taxon>
        <taxon>Amphibia</taxon>
        <taxon>Batrachia</taxon>
        <taxon>Anura</taxon>
        <taxon>Pipoidea</taxon>
        <taxon>Pipidae</taxon>
        <taxon>Xenopodinae</taxon>
        <taxon>Xenopus</taxon>
        <taxon>Xenopus</taxon>
    </lineage>
</organism>
<sequence length="428" mass="48864">MAENGDKEQKLDSDTKICEQIEYYFGDHNLPRDKFLKQQILLDDGWVPLETMIKFNRLSKLTTDFNTILQALKKSKTELLEINEEKCKIRRSPAKPLPELNDEYKNSLKHKSVYIKGFPTSAILDDVKEWLKDKGPIENIQMRRTLQREFKGSIFIIFNTDDDAKKFLENRNLKYKDNDMTVLSREEYHAKKNEERKLNKSEEKAKSKQVKKEAQKQAEDAERKLVEERVGSLLKFSGDLDNMTSREDLHALFQTHGDIEWIDFSRGAKEGIVLFKMNAKEALDKAKAANSDNLKLKGKDVKWELIEGDTEKEALKKILEGKQESFNKRKGRDGRKFKGKGRGGKGNDSSSRKRTQFQGKKKTFDSSDDEDDMEESESPQKASVKAEESAGTKNGAAAAPGSPKKRSLDDKAEDGPAVKQSKTEVGDQ</sequence>